<accession>Q92FR7</accession>
<feature type="chain" id="PRO_0000182216" description="Arginine deiminase">
    <location>
        <begin position="1"/>
        <end position="408"/>
    </location>
</feature>
<feature type="active site" description="Amidino-cysteine intermediate" evidence="1">
    <location>
        <position position="397"/>
    </location>
</feature>
<reference key="1">
    <citation type="journal article" date="2001" name="Science">
        <title>Comparative genomics of Listeria species.</title>
        <authorList>
            <person name="Glaser P."/>
            <person name="Frangeul L."/>
            <person name="Buchrieser C."/>
            <person name="Rusniok C."/>
            <person name="Amend A."/>
            <person name="Baquero F."/>
            <person name="Berche P."/>
            <person name="Bloecker H."/>
            <person name="Brandt P."/>
            <person name="Chakraborty T."/>
            <person name="Charbit A."/>
            <person name="Chetouani F."/>
            <person name="Couve E."/>
            <person name="de Daruvar A."/>
            <person name="Dehoux P."/>
            <person name="Domann E."/>
            <person name="Dominguez-Bernal G."/>
            <person name="Duchaud E."/>
            <person name="Durant L."/>
            <person name="Dussurget O."/>
            <person name="Entian K.-D."/>
            <person name="Fsihi H."/>
            <person name="Garcia-del Portillo F."/>
            <person name="Garrido P."/>
            <person name="Gautier L."/>
            <person name="Goebel W."/>
            <person name="Gomez-Lopez N."/>
            <person name="Hain T."/>
            <person name="Hauf J."/>
            <person name="Jackson D."/>
            <person name="Jones L.-M."/>
            <person name="Kaerst U."/>
            <person name="Kreft J."/>
            <person name="Kuhn M."/>
            <person name="Kunst F."/>
            <person name="Kurapkat G."/>
            <person name="Madueno E."/>
            <person name="Maitournam A."/>
            <person name="Mata Vicente J."/>
            <person name="Ng E."/>
            <person name="Nedjari H."/>
            <person name="Nordsiek G."/>
            <person name="Novella S."/>
            <person name="de Pablos B."/>
            <person name="Perez-Diaz J.-C."/>
            <person name="Purcell R."/>
            <person name="Remmel B."/>
            <person name="Rose M."/>
            <person name="Schlueter T."/>
            <person name="Simoes N."/>
            <person name="Tierrez A."/>
            <person name="Vazquez-Boland J.-A."/>
            <person name="Voss H."/>
            <person name="Wehland J."/>
            <person name="Cossart P."/>
        </authorList>
    </citation>
    <scope>NUCLEOTIDE SEQUENCE [LARGE SCALE GENOMIC DNA]</scope>
    <source>
        <strain>ATCC BAA-680 / CLIP 11262</strain>
    </source>
</reference>
<sequence length="408" mass="46592">MENGLNITSEIGKLQTVLVKRPGSELENITPEYLESLLFDDIPYLKMMQKEHDFFVKTMQDSNIEVLYLEKLAAEALKEASNKENFLTKMIKESNQMDESALYVRDYLMSFDEEEMIKKLMSGLKKSEIPERKKKHLNEMMDEQYPFFLDPLPNLYFTRDPAAVIGSGVTINKMFQPARRRESLFIELILKHHPRFSSQEIPIWSGREEPFPLEGGDELILNEETVLVGVSERTDARAVERLAESLFSRAPKIKRVLAAEIPETRSFMHLDTVFTMVNFAQFTIHPAIQNQQGELNVYILEKSENGLEITPRRDFKRVIAEVLGVPEVDFIPCGGEDVIVSAREQWNDGANTLAIAPGEVITYDRNHVSNDLLRKAGIKVHEVISSELSRGRGGPRCMTMPITRGNLK</sequence>
<dbReference type="EC" id="3.5.3.6" evidence="1"/>
<dbReference type="EMBL" id="AL596163">
    <property type="protein sequence ID" value="CAC95269.1"/>
    <property type="molecule type" value="Genomic_DNA"/>
</dbReference>
<dbReference type="PIR" id="AE1437">
    <property type="entry name" value="AE1437"/>
</dbReference>
<dbReference type="SMR" id="Q92FR7"/>
<dbReference type="STRING" id="272626.gene:17564347"/>
<dbReference type="KEGG" id="lin:lin0036"/>
<dbReference type="eggNOG" id="COG2235">
    <property type="taxonomic scope" value="Bacteria"/>
</dbReference>
<dbReference type="HOGENOM" id="CLU_052662_0_1_9"/>
<dbReference type="UniPathway" id="UPA00254">
    <property type="reaction ID" value="UER00364"/>
</dbReference>
<dbReference type="Proteomes" id="UP000002513">
    <property type="component" value="Chromosome"/>
</dbReference>
<dbReference type="GO" id="GO:0005737">
    <property type="term" value="C:cytoplasm"/>
    <property type="evidence" value="ECO:0007669"/>
    <property type="project" value="UniProtKB-SubCell"/>
</dbReference>
<dbReference type="GO" id="GO:0016990">
    <property type="term" value="F:arginine deiminase activity"/>
    <property type="evidence" value="ECO:0007669"/>
    <property type="project" value="UniProtKB-UniRule"/>
</dbReference>
<dbReference type="GO" id="GO:0019547">
    <property type="term" value="P:arginine catabolic process to ornithine"/>
    <property type="evidence" value="ECO:0007669"/>
    <property type="project" value="UniProtKB-UniRule"/>
</dbReference>
<dbReference type="GO" id="GO:0019546">
    <property type="term" value="P:arginine deiminase pathway"/>
    <property type="evidence" value="ECO:0007669"/>
    <property type="project" value="TreeGrafter"/>
</dbReference>
<dbReference type="Gene3D" id="1.10.3930.10">
    <property type="entry name" value="Arginine deiminase"/>
    <property type="match status" value="1"/>
</dbReference>
<dbReference type="Gene3D" id="3.75.10.10">
    <property type="entry name" value="L-arginine/glycine Amidinotransferase, Chain A"/>
    <property type="match status" value="1"/>
</dbReference>
<dbReference type="HAMAP" id="MF_00242">
    <property type="entry name" value="Arg_deiminase"/>
    <property type="match status" value="1"/>
</dbReference>
<dbReference type="InterPro" id="IPR003876">
    <property type="entry name" value="Arg_deiminase"/>
</dbReference>
<dbReference type="NCBIfam" id="TIGR01078">
    <property type="entry name" value="arcA"/>
    <property type="match status" value="1"/>
</dbReference>
<dbReference type="NCBIfam" id="NF002381">
    <property type="entry name" value="PRK01388.1"/>
    <property type="match status" value="1"/>
</dbReference>
<dbReference type="PANTHER" id="PTHR47271">
    <property type="entry name" value="ARGININE DEIMINASE"/>
    <property type="match status" value="1"/>
</dbReference>
<dbReference type="PANTHER" id="PTHR47271:SF2">
    <property type="entry name" value="ARGININE DEIMINASE"/>
    <property type="match status" value="1"/>
</dbReference>
<dbReference type="Pfam" id="PF02274">
    <property type="entry name" value="ADI"/>
    <property type="match status" value="1"/>
</dbReference>
<dbReference type="PIRSF" id="PIRSF006356">
    <property type="entry name" value="Arg_deiminase"/>
    <property type="match status" value="1"/>
</dbReference>
<dbReference type="PRINTS" id="PR01466">
    <property type="entry name" value="ARGDEIMINASE"/>
</dbReference>
<dbReference type="SUPFAM" id="SSF55909">
    <property type="entry name" value="Pentein"/>
    <property type="match status" value="1"/>
</dbReference>
<evidence type="ECO:0000255" key="1">
    <source>
        <dbReference type="HAMAP-Rule" id="MF_00242"/>
    </source>
</evidence>
<organism>
    <name type="scientific">Listeria innocua serovar 6a (strain ATCC BAA-680 / CLIP 11262)</name>
    <dbReference type="NCBI Taxonomy" id="272626"/>
    <lineage>
        <taxon>Bacteria</taxon>
        <taxon>Bacillati</taxon>
        <taxon>Bacillota</taxon>
        <taxon>Bacilli</taxon>
        <taxon>Bacillales</taxon>
        <taxon>Listeriaceae</taxon>
        <taxon>Listeria</taxon>
    </lineage>
</organism>
<protein>
    <recommendedName>
        <fullName evidence="1">Arginine deiminase</fullName>
        <shortName evidence="1">ADI</shortName>
        <ecNumber evidence="1">3.5.3.6</ecNumber>
    </recommendedName>
    <alternativeName>
        <fullName evidence="1">Arginine dihydrolase</fullName>
        <shortName evidence="1">AD</shortName>
    </alternativeName>
</protein>
<gene>
    <name evidence="1" type="primary">arcA</name>
    <name type="ordered locus">lin0036</name>
</gene>
<name>ARCA_LISIN</name>
<comment type="catalytic activity">
    <reaction evidence="1">
        <text>L-arginine + H2O = L-citrulline + NH4(+)</text>
        <dbReference type="Rhea" id="RHEA:19597"/>
        <dbReference type="ChEBI" id="CHEBI:15377"/>
        <dbReference type="ChEBI" id="CHEBI:28938"/>
        <dbReference type="ChEBI" id="CHEBI:32682"/>
        <dbReference type="ChEBI" id="CHEBI:57743"/>
        <dbReference type="EC" id="3.5.3.6"/>
    </reaction>
</comment>
<comment type="pathway">
    <text evidence="1">Amino-acid degradation; L-arginine degradation via ADI pathway; carbamoyl phosphate from L-arginine: step 1/2.</text>
</comment>
<comment type="subcellular location">
    <subcellularLocation>
        <location evidence="1">Cytoplasm</location>
    </subcellularLocation>
</comment>
<comment type="similarity">
    <text evidence="1">Belongs to the arginine deiminase family.</text>
</comment>
<keyword id="KW-0056">Arginine metabolism</keyword>
<keyword id="KW-0963">Cytoplasm</keyword>
<keyword id="KW-0378">Hydrolase</keyword>
<proteinExistence type="inferred from homology"/>